<dbReference type="EMBL" id="CP001029">
    <property type="protein sequence ID" value="ACB80565.1"/>
    <property type="molecule type" value="Genomic_DNA"/>
</dbReference>
<dbReference type="RefSeq" id="WP_012454296.1">
    <property type="nucleotide sequence ID" value="NC_010725.1"/>
</dbReference>
<dbReference type="SMR" id="B1Z970"/>
<dbReference type="STRING" id="441620.Mpop_2403"/>
<dbReference type="KEGG" id="mpo:Mpop_2403"/>
<dbReference type="eggNOG" id="COG1825">
    <property type="taxonomic scope" value="Bacteria"/>
</dbReference>
<dbReference type="HOGENOM" id="CLU_075939_0_0_5"/>
<dbReference type="OrthoDB" id="9806411at2"/>
<dbReference type="Proteomes" id="UP000007136">
    <property type="component" value="Chromosome"/>
</dbReference>
<dbReference type="GO" id="GO:0022625">
    <property type="term" value="C:cytosolic large ribosomal subunit"/>
    <property type="evidence" value="ECO:0007669"/>
    <property type="project" value="TreeGrafter"/>
</dbReference>
<dbReference type="GO" id="GO:0008097">
    <property type="term" value="F:5S rRNA binding"/>
    <property type="evidence" value="ECO:0007669"/>
    <property type="project" value="InterPro"/>
</dbReference>
<dbReference type="GO" id="GO:0003735">
    <property type="term" value="F:structural constituent of ribosome"/>
    <property type="evidence" value="ECO:0007669"/>
    <property type="project" value="InterPro"/>
</dbReference>
<dbReference type="GO" id="GO:0006412">
    <property type="term" value="P:translation"/>
    <property type="evidence" value="ECO:0007669"/>
    <property type="project" value="UniProtKB-UniRule"/>
</dbReference>
<dbReference type="CDD" id="cd00495">
    <property type="entry name" value="Ribosomal_L25_TL5_CTC"/>
    <property type="match status" value="1"/>
</dbReference>
<dbReference type="Gene3D" id="2.170.120.20">
    <property type="entry name" value="Ribosomal protein L25, beta domain"/>
    <property type="match status" value="1"/>
</dbReference>
<dbReference type="Gene3D" id="2.40.240.10">
    <property type="entry name" value="Ribosomal Protein L25, Chain P"/>
    <property type="match status" value="1"/>
</dbReference>
<dbReference type="HAMAP" id="MF_01334">
    <property type="entry name" value="Ribosomal_bL25_CTC"/>
    <property type="match status" value="1"/>
</dbReference>
<dbReference type="InterPro" id="IPR020056">
    <property type="entry name" value="Rbsml_bL25/Gln-tRNA_synth_N"/>
</dbReference>
<dbReference type="InterPro" id="IPR011035">
    <property type="entry name" value="Ribosomal_bL25/Gln-tRNA_synth"/>
</dbReference>
<dbReference type="InterPro" id="IPR020057">
    <property type="entry name" value="Ribosomal_bL25_b-dom"/>
</dbReference>
<dbReference type="InterPro" id="IPR037121">
    <property type="entry name" value="Ribosomal_bL25_C"/>
</dbReference>
<dbReference type="InterPro" id="IPR001021">
    <property type="entry name" value="Ribosomal_bL25_long"/>
</dbReference>
<dbReference type="InterPro" id="IPR029751">
    <property type="entry name" value="Ribosomal_L25_dom"/>
</dbReference>
<dbReference type="InterPro" id="IPR020930">
    <property type="entry name" value="Ribosomal_uL5_bac-type"/>
</dbReference>
<dbReference type="NCBIfam" id="TIGR00731">
    <property type="entry name" value="bL25_bact_ctc"/>
    <property type="match status" value="1"/>
</dbReference>
<dbReference type="NCBIfam" id="NF004128">
    <property type="entry name" value="PRK05618.1-2"/>
    <property type="match status" value="1"/>
</dbReference>
<dbReference type="PANTHER" id="PTHR33284">
    <property type="entry name" value="RIBOSOMAL PROTEIN L25/GLN-TRNA SYNTHETASE, ANTI-CODON-BINDING DOMAIN-CONTAINING PROTEIN"/>
    <property type="match status" value="1"/>
</dbReference>
<dbReference type="PANTHER" id="PTHR33284:SF1">
    <property type="entry name" value="RIBOSOMAL PROTEIN L25_GLN-TRNA SYNTHETASE, ANTI-CODON-BINDING DOMAIN-CONTAINING PROTEIN"/>
    <property type="match status" value="1"/>
</dbReference>
<dbReference type="Pfam" id="PF01386">
    <property type="entry name" value="Ribosomal_L25p"/>
    <property type="match status" value="1"/>
</dbReference>
<dbReference type="Pfam" id="PF14693">
    <property type="entry name" value="Ribosomal_TL5_C"/>
    <property type="match status" value="1"/>
</dbReference>
<dbReference type="SUPFAM" id="SSF50715">
    <property type="entry name" value="Ribosomal protein L25-like"/>
    <property type="match status" value="1"/>
</dbReference>
<proteinExistence type="inferred from homology"/>
<sequence>MSATKTLEAVARDRVGKGAARAVRRQGQIPAVIYGGNQAPEAIAVDLIRTRTLIYAGGFKTTLFDITVGGKKTRAIPRDYQLDPVSGVPLHVDFLRVVSGQTVTVDVPVHFVNDEKAPGIKQKGGTLNVALHTVSLDVAPDQIPDAIEVDLTGREIGDVIHASDLRLPAGTYTGEPTDTVANILPPTVLGAEVEAEEAAIAEAQSAEAAEEKAEAEAEATNEKNDTEE</sequence>
<protein>
    <recommendedName>
        <fullName evidence="1">Large ribosomal subunit protein bL25</fullName>
    </recommendedName>
    <alternativeName>
        <fullName evidence="3">50S ribosomal protein L25</fullName>
    </alternativeName>
    <alternativeName>
        <fullName evidence="1">General stress protein CTC</fullName>
    </alternativeName>
</protein>
<evidence type="ECO:0000255" key="1">
    <source>
        <dbReference type="HAMAP-Rule" id="MF_01334"/>
    </source>
</evidence>
<evidence type="ECO:0000256" key="2">
    <source>
        <dbReference type="SAM" id="MobiDB-lite"/>
    </source>
</evidence>
<evidence type="ECO:0000305" key="3"/>
<comment type="function">
    <text evidence="1">This is one of the proteins that binds to the 5S RNA in the ribosome where it forms part of the central protuberance.</text>
</comment>
<comment type="subunit">
    <text evidence="1">Part of the 50S ribosomal subunit; part of the 5S rRNA/L5/L18/L25 subcomplex. Contacts the 5S rRNA. Binds to the 5S rRNA independently of L5 and L18.</text>
</comment>
<comment type="similarity">
    <text evidence="1">Belongs to the bacterial ribosomal protein bL25 family. CTC subfamily.</text>
</comment>
<name>RL25_METPB</name>
<feature type="chain" id="PRO_1000142533" description="Large ribosomal subunit protein bL25">
    <location>
        <begin position="1"/>
        <end position="228"/>
    </location>
</feature>
<feature type="region of interest" description="Disordered" evidence="2">
    <location>
        <begin position="198"/>
        <end position="228"/>
    </location>
</feature>
<feature type="compositionally biased region" description="Basic and acidic residues" evidence="2">
    <location>
        <begin position="209"/>
        <end position="228"/>
    </location>
</feature>
<keyword id="KW-0687">Ribonucleoprotein</keyword>
<keyword id="KW-0689">Ribosomal protein</keyword>
<keyword id="KW-0694">RNA-binding</keyword>
<keyword id="KW-0699">rRNA-binding</keyword>
<accession>B1Z970</accession>
<gene>
    <name evidence="1" type="primary">rplY</name>
    <name evidence="1" type="synonym">ctc</name>
    <name type="ordered locus">Mpop_2403</name>
</gene>
<reference key="1">
    <citation type="submission" date="2008-04" db="EMBL/GenBank/DDBJ databases">
        <title>Complete sequence of chromosome of Methylobacterium populi BJ001.</title>
        <authorList>
            <consortium name="US DOE Joint Genome Institute"/>
            <person name="Copeland A."/>
            <person name="Lucas S."/>
            <person name="Lapidus A."/>
            <person name="Glavina del Rio T."/>
            <person name="Dalin E."/>
            <person name="Tice H."/>
            <person name="Bruce D."/>
            <person name="Goodwin L."/>
            <person name="Pitluck S."/>
            <person name="Chertkov O."/>
            <person name="Brettin T."/>
            <person name="Detter J.C."/>
            <person name="Han C."/>
            <person name="Kuske C.R."/>
            <person name="Schmutz J."/>
            <person name="Larimer F."/>
            <person name="Land M."/>
            <person name="Hauser L."/>
            <person name="Kyrpides N."/>
            <person name="Mikhailova N."/>
            <person name="Marx C."/>
            <person name="Richardson P."/>
        </authorList>
    </citation>
    <scope>NUCLEOTIDE SEQUENCE [LARGE SCALE GENOMIC DNA]</scope>
    <source>
        <strain>ATCC BAA-705 / NCIMB 13946 / BJ001</strain>
    </source>
</reference>
<organism>
    <name type="scientific">Methylorubrum populi (strain ATCC BAA-705 / NCIMB 13946 / BJ001)</name>
    <name type="common">Methylobacterium populi</name>
    <dbReference type="NCBI Taxonomy" id="441620"/>
    <lineage>
        <taxon>Bacteria</taxon>
        <taxon>Pseudomonadati</taxon>
        <taxon>Pseudomonadota</taxon>
        <taxon>Alphaproteobacteria</taxon>
        <taxon>Hyphomicrobiales</taxon>
        <taxon>Methylobacteriaceae</taxon>
        <taxon>Methylorubrum</taxon>
    </lineage>
</organism>